<name>HUTI_LEGPL</name>
<accession>Q5WYI8</accession>
<protein>
    <recommendedName>
        <fullName evidence="1">Imidazolonepropionase</fullName>
        <ecNumber evidence="1">3.5.2.7</ecNumber>
    </recommendedName>
    <alternativeName>
        <fullName evidence="1">Imidazolone-5-propionate hydrolase</fullName>
    </alternativeName>
</protein>
<sequence length="403" mass="43798">MFACDELLLNASTIDATGLQLYNQAIVIRKGRIEWCGSEDQLPVHFQESAKSRKDCHGQLITPGLIDCHTHLVYAGHRAAEFRLKSQGVSYADIAKSGGGILSTVQMTRDASEEELIDQSLPRLLALKNEGVTTVEIKSGYGLDLQNELKMLRVARQLGDMAGVRVKTTFLGAHAVGPEFKGNSQAYVDFLCNEMLPAAKNMDLVDAVDVFCESIAFSIRQAEQIFQAAKNLNLPIKCHAEQLSNMGASSLAARYGALSCDHLEFLDENGALNMVKANTVAVLLPGAFYFLKEKQKPPVDLLRQVGVGMAIATDSNPGSSPTTSLLLMMSMACQFFSMSIPEVLSAVTYQASRALGMEKDIGSIEAGKIADLVLWSIKDSAALCYYFAYPLPHQTMVAGEWVS</sequence>
<feature type="chain" id="PRO_0000306469" description="Imidazolonepropionase">
    <location>
        <begin position="1"/>
        <end position="403"/>
    </location>
</feature>
<feature type="binding site" evidence="1">
    <location>
        <position position="69"/>
    </location>
    <ligand>
        <name>Fe(3+)</name>
        <dbReference type="ChEBI" id="CHEBI:29034"/>
    </ligand>
</feature>
<feature type="binding site" evidence="1">
    <location>
        <position position="69"/>
    </location>
    <ligand>
        <name>Zn(2+)</name>
        <dbReference type="ChEBI" id="CHEBI:29105"/>
    </ligand>
</feature>
<feature type="binding site" evidence="1">
    <location>
        <position position="71"/>
    </location>
    <ligand>
        <name>Fe(3+)</name>
        <dbReference type="ChEBI" id="CHEBI:29034"/>
    </ligand>
</feature>
<feature type="binding site" evidence="1">
    <location>
        <position position="71"/>
    </location>
    <ligand>
        <name>Zn(2+)</name>
        <dbReference type="ChEBI" id="CHEBI:29105"/>
    </ligand>
</feature>
<feature type="binding site" evidence="1">
    <location>
        <position position="78"/>
    </location>
    <ligand>
        <name>4-imidazolone-5-propanoate</name>
        <dbReference type="ChEBI" id="CHEBI:77893"/>
    </ligand>
</feature>
<feature type="binding site" evidence="1">
    <location>
        <position position="141"/>
    </location>
    <ligand>
        <name>4-imidazolone-5-propanoate</name>
        <dbReference type="ChEBI" id="CHEBI:77893"/>
    </ligand>
</feature>
<feature type="binding site" evidence="1">
    <location>
        <position position="141"/>
    </location>
    <ligand>
        <name>N-formimidoyl-L-glutamate</name>
        <dbReference type="ChEBI" id="CHEBI:58928"/>
    </ligand>
</feature>
<feature type="binding site" evidence="1">
    <location>
        <position position="174"/>
    </location>
    <ligand>
        <name>4-imidazolone-5-propanoate</name>
        <dbReference type="ChEBI" id="CHEBI:77893"/>
    </ligand>
</feature>
<feature type="binding site" evidence="1">
    <location>
        <position position="239"/>
    </location>
    <ligand>
        <name>Fe(3+)</name>
        <dbReference type="ChEBI" id="CHEBI:29034"/>
    </ligand>
</feature>
<feature type="binding site" evidence="1">
    <location>
        <position position="239"/>
    </location>
    <ligand>
        <name>Zn(2+)</name>
        <dbReference type="ChEBI" id="CHEBI:29105"/>
    </ligand>
</feature>
<feature type="binding site" evidence="1">
    <location>
        <position position="242"/>
    </location>
    <ligand>
        <name>4-imidazolone-5-propanoate</name>
        <dbReference type="ChEBI" id="CHEBI:77893"/>
    </ligand>
</feature>
<feature type="binding site" evidence="1">
    <location>
        <position position="314"/>
    </location>
    <ligand>
        <name>Fe(3+)</name>
        <dbReference type="ChEBI" id="CHEBI:29034"/>
    </ligand>
</feature>
<feature type="binding site" evidence="1">
    <location>
        <position position="314"/>
    </location>
    <ligand>
        <name>Zn(2+)</name>
        <dbReference type="ChEBI" id="CHEBI:29105"/>
    </ligand>
</feature>
<feature type="binding site" evidence="1">
    <location>
        <position position="316"/>
    </location>
    <ligand>
        <name>N-formimidoyl-L-glutamate</name>
        <dbReference type="ChEBI" id="CHEBI:58928"/>
    </ligand>
</feature>
<feature type="binding site" evidence="1">
    <location>
        <position position="318"/>
    </location>
    <ligand>
        <name>N-formimidoyl-L-glutamate</name>
        <dbReference type="ChEBI" id="CHEBI:58928"/>
    </ligand>
</feature>
<feature type="binding site" evidence="1">
    <location>
        <position position="319"/>
    </location>
    <ligand>
        <name>4-imidazolone-5-propanoate</name>
        <dbReference type="ChEBI" id="CHEBI:77893"/>
    </ligand>
</feature>
<reference key="1">
    <citation type="journal article" date="2004" name="Nat. Genet.">
        <title>Evidence in the Legionella pneumophila genome for exploitation of host cell functions and high genome plasticity.</title>
        <authorList>
            <person name="Cazalet C."/>
            <person name="Rusniok C."/>
            <person name="Brueggemann H."/>
            <person name="Zidane N."/>
            <person name="Magnier A."/>
            <person name="Ma L."/>
            <person name="Tichit M."/>
            <person name="Jarraud S."/>
            <person name="Bouchier C."/>
            <person name="Vandenesch F."/>
            <person name="Kunst F."/>
            <person name="Etienne J."/>
            <person name="Glaser P."/>
            <person name="Buchrieser C."/>
        </authorList>
    </citation>
    <scope>NUCLEOTIDE SEQUENCE [LARGE SCALE GENOMIC DNA]</scope>
    <source>
        <strain>Lens</strain>
    </source>
</reference>
<keyword id="KW-0963">Cytoplasm</keyword>
<keyword id="KW-0369">Histidine metabolism</keyword>
<keyword id="KW-0378">Hydrolase</keyword>
<keyword id="KW-0408">Iron</keyword>
<keyword id="KW-0479">Metal-binding</keyword>
<keyword id="KW-0862">Zinc</keyword>
<gene>
    <name evidence="1" type="primary">hutI</name>
    <name type="ordered locus">lpl0748</name>
</gene>
<proteinExistence type="inferred from homology"/>
<evidence type="ECO:0000255" key="1">
    <source>
        <dbReference type="HAMAP-Rule" id="MF_00372"/>
    </source>
</evidence>
<dbReference type="EC" id="3.5.2.7" evidence="1"/>
<dbReference type="EMBL" id="CR628337">
    <property type="protein sequence ID" value="CAH14982.1"/>
    <property type="molecule type" value="Genomic_DNA"/>
</dbReference>
<dbReference type="RefSeq" id="WP_011214921.1">
    <property type="nucleotide sequence ID" value="NC_006369.1"/>
</dbReference>
<dbReference type="SMR" id="Q5WYI8"/>
<dbReference type="KEGG" id="lpf:lpl0748"/>
<dbReference type="LegioList" id="lpl0748"/>
<dbReference type="HOGENOM" id="CLU_041647_0_0_6"/>
<dbReference type="UniPathway" id="UPA00379">
    <property type="reaction ID" value="UER00551"/>
</dbReference>
<dbReference type="Proteomes" id="UP000002517">
    <property type="component" value="Chromosome"/>
</dbReference>
<dbReference type="GO" id="GO:0005737">
    <property type="term" value="C:cytoplasm"/>
    <property type="evidence" value="ECO:0007669"/>
    <property type="project" value="UniProtKB-SubCell"/>
</dbReference>
<dbReference type="GO" id="GO:0050480">
    <property type="term" value="F:imidazolonepropionase activity"/>
    <property type="evidence" value="ECO:0007669"/>
    <property type="project" value="UniProtKB-UniRule"/>
</dbReference>
<dbReference type="GO" id="GO:0005506">
    <property type="term" value="F:iron ion binding"/>
    <property type="evidence" value="ECO:0007669"/>
    <property type="project" value="UniProtKB-UniRule"/>
</dbReference>
<dbReference type="GO" id="GO:0008270">
    <property type="term" value="F:zinc ion binding"/>
    <property type="evidence" value="ECO:0007669"/>
    <property type="project" value="UniProtKB-UniRule"/>
</dbReference>
<dbReference type="GO" id="GO:0019556">
    <property type="term" value="P:L-histidine catabolic process to glutamate and formamide"/>
    <property type="evidence" value="ECO:0007669"/>
    <property type="project" value="UniProtKB-UniPathway"/>
</dbReference>
<dbReference type="GO" id="GO:0019557">
    <property type="term" value="P:L-histidine catabolic process to glutamate and formate"/>
    <property type="evidence" value="ECO:0007669"/>
    <property type="project" value="UniProtKB-UniPathway"/>
</dbReference>
<dbReference type="CDD" id="cd01296">
    <property type="entry name" value="Imidazolone-5PH"/>
    <property type="match status" value="1"/>
</dbReference>
<dbReference type="FunFam" id="3.20.20.140:FF:000007">
    <property type="entry name" value="Imidazolonepropionase"/>
    <property type="match status" value="1"/>
</dbReference>
<dbReference type="Gene3D" id="3.20.20.140">
    <property type="entry name" value="Metal-dependent hydrolases"/>
    <property type="match status" value="1"/>
</dbReference>
<dbReference type="Gene3D" id="2.30.40.10">
    <property type="entry name" value="Urease, subunit C, domain 1"/>
    <property type="match status" value="1"/>
</dbReference>
<dbReference type="HAMAP" id="MF_00372">
    <property type="entry name" value="HutI"/>
    <property type="match status" value="1"/>
</dbReference>
<dbReference type="InterPro" id="IPR006680">
    <property type="entry name" value="Amidohydro-rel"/>
</dbReference>
<dbReference type="InterPro" id="IPR005920">
    <property type="entry name" value="HutI"/>
</dbReference>
<dbReference type="InterPro" id="IPR011059">
    <property type="entry name" value="Metal-dep_hydrolase_composite"/>
</dbReference>
<dbReference type="InterPro" id="IPR032466">
    <property type="entry name" value="Metal_Hydrolase"/>
</dbReference>
<dbReference type="NCBIfam" id="TIGR01224">
    <property type="entry name" value="hutI"/>
    <property type="match status" value="1"/>
</dbReference>
<dbReference type="PANTHER" id="PTHR42752">
    <property type="entry name" value="IMIDAZOLONEPROPIONASE"/>
    <property type="match status" value="1"/>
</dbReference>
<dbReference type="PANTHER" id="PTHR42752:SF1">
    <property type="entry name" value="IMIDAZOLONEPROPIONASE-RELATED"/>
    <property type="match status" value="1"/>
</dbReference>
<dbReference type="Pfam" id="PF01979">
    <property type="entry name" value="Amidohydro_1"/>
    <property type="match status" value="1"/>
</dbReference>
<dbReference type="SUPFAM" id="SSF51338">
    <property type="entry name" value="Composite domain of metallo-dependent hydrolases"/>
    <property type="match status" value="1"/>
</dbReference>
<dbReference type="SUPFAM" id="SSF51556">
    <property type="entry name" value="Metallo-dependent hydrolases"/>
    <property type="match status" value="1"/>
</dbReference>
<organism>
    <name type="scientific">Legionella pneumophila (strain Lens)</name>
    <dbReference type="NCBI Taxonomy" id="297245"/>
    <lineage>
        <taxon>Bacteria</taxon>
        <taxon>Pseudomonadati</taxon>
        <taxon>Pseudomonadota</taxon>
        <taxon>Gammaproteobacteria</taxon>
        <taxon>Legionellales</taxon>
        <taxon>Legionellaceae</taxon>
        <taxon>Legionella</taxon>
    </lineage>
</organism>
<comment type="function">
    <text evidence="1">Catalyzes the hydrolytic cleavage of the carbon-nitrogen bond in imidazolone-5-propanoate to yield N-formimidoyl-L-glutamate. It is the third step in the universal histidine degradation pathway.</text>
</comment>
<comment type="catalytic activity">
    <reaction evidence="1">
        <text>4-imidazolone-5-propanoate + H2O = N-formimidoyl-L-glutamate</text>
        <dbReference type="Rhea" id="RHEA:23660"/>
        <dbReference type="ChEBI" id="CHEBI:15377"/>
        <dbReference type="ChEBI" id="CHEBI:58928"/>
        <dbReference type="ChEBI" id="CHEBI:77893"/>
        <dbReference type="EC" id="3.5.2.7"/>
    </reaction>
</comment>
<comment type="cofactor">
    <cofactor evidence="1">
        <name>Zn(2+)</name>
        <dbReference type="ChEBI" id="CHEBI:29105"/>
    </cofactor>
    <cofactor evidence="1">
        <name>Fe(3+)</name>
        <dbReference type="ChEBI" id="CHEBI:29034"/>
    </cofactor>
    <text evidence="1">Binds 1 zinc or iron ion per subunit.</text>
</comment>
<comment type="pathway">
    <text evidence="1">Amino-acid degradation; L-histidine degradation into L-glutamate; N-formimidoyl-L-glutamate from L-histidine: step 3/3.</text>
</comment>
<comment type="subcellular location">
    <subcellularLocation>
        <location evidence="1">Cytoplasm</location>
    </subcellularLocation>
</comment>
<comment type="similarity">
    <text evidence="1">Belongs to the metallo-dependent hydrolases superfamily. HutI family.</text>
</comment>